<sequence length="228" mass="25975">MLYIEQSEMMLVPLITVTVVAGTILVCYILYICRKKIRTVYNDNKIIMTKLKKIKSPNSSKSSKSTDSESDWEDHCSAMEQNNDVDNISRNEILNDDSFAGSLIWDNESNIMAPSTEHIYDSVAGSTLLINNDRNEQTIYQNTTVVINDTETVEILNEDTKQIPSYSSNPFVNYNKTSICSKSNPFIAELNNKFSDNNPFRRAHSDDYLNKQQDHEYDDIESSVVSLV</sequence>
<organismHost>
    <name type="scientific">Cynomys gunnisoni</name>
    <name type="common">Gunnison's prairie dog</name>
    <name type="synonym">Spermophilus gunnisoni</name>
    <dbReference type="NCBI Taxonomy" id="45479"/>
</organismHost>
<organismHost>
    <name type="scientific">Cynomys leucurus</name>
    <name type="common">White-tailed prairie dog</name>
    <dbReference type="NCBI Taxonomy" id="99825"/>
</organismHost>
<organismHost>
    <name type="scientific">Cynomys ludovicianus</name>
    <name type="common">Black-tailed prairie dog</name>
    <dbReference type="NCBI Taxonomy" id="45480"/>
</organismHost>
<organismHost>
    <name type="scientific">Cynomys mexicanus</name>
    <name type="common">Mexican prairie dog</name>
    <dbReference type="NCBI Taxonomy" id="99826"/>
</organismHost>
<organismHost>
    <name type="scientific">Cynomys parvidens</name>
    <name type="common">Utah prairie dog</name>
    <dbReference type="NCBI Taxonomy" id="99827"/>
</organismHost>
<organismHost>
    <name type="scientific">Gliridae</name>
    <name type="common">dormice</name>
    <dbReference type="NCBI Taxonomy" id="30650"/>
</organismHost>
<organismHost>
    <name type="scientific">Heliosciurus ruwenzorii</name>
    <name type="common">Ruwenzori sun squirrel</name>
    <dbReference type="NCBI Taxonomy" id="226685"/>
</organismHost>
<organismHost>
    <name type="scientific">Homo sapiens</name>
    <name type="common">Human</name>
    <dbReference type="NCBI Taxonomy" id="9606"/>
</organismHost>
<organismHost>
    <name type="scientific">Mus musculus</name>
    <name type="common">Mouse</name>
    <dbReference type="NCBI Taxonomy" id="10090"/>
</organismHost>
<dbReference type="EMBL" id="MT903340">
    <property type="protein sequence ID" value="QNP13018.1"/>
    <property type="molecule type" value="Genomic_DNA"/>
</dbReference>
<dbReference type="RefSeq" id="YP_010377145.1">
    <property type="nucleotide sequence ID" value="NC_063383.1"/>
</dbReference>
<dbReference type="GeneID" id="72551558"/>
<dbReference type="Proteomes" id="UP000516359">
    <property type="component" value="Genome"/>
</dbReference>
<dbReference type="GO" id="GO:0020002">
    <property type="term" value="C:host cell plasma membrane"/>
    <property type="evidence" value="ECO:0007669"/>
    <property type="project" value="UniProtKB-SubCell"/>
</dbReference>
<dbReference type="GO" id="GO:0016020">
    <property type="term" value="C:membrane"/>
    <property type="evidence" value="ECO:0007669"/>
    <property type="project" value="UniProtKB-KW"/>
</dbReference>
<dbReference type="InterPro" id="IPR010274">
    <property type="entry name" value="Orthopox_A36R"/>
</dbReference>
<dbReference type="Pfam" id="PF05950">
    <property type="entry name" value="Orthopox_A36R"/>
    <property type="match status" value="1"/>
</dbReference>
<reference key="1">
    <citation type="journal article" date="2022" name="J. Infect. Dis.">
        <title>Exportation of Monkeypox virus from the African continent.</title>
        <authorList>
            <person name="Mauldin M.R."/>
            <person name="McCollum A.M."/>
            <person name="Nakazawa Y.J."/>
            <person name="Mandra A."/>
            <person name="Whitehouse E.R."/>
            <person name="Davidson W."/>
            <person name="Zhao H."/>
            <person name="Gao J."/>
            <person name="Li Y."/>
            <person name="Doty J."/>
            <person name="Yinka-Ogunleye A."/>
            <person name="Akinpelu A."/>
            <person name="Aruna O."/>
            <person name="Naidoo D."/>
            <person name="Lewandowski K."/>
            <person name="Afrough B."/>
            <person name="Graham V."/>
            <person name="Aarons E."/>
            <person name="Hewson R."/>
            <person name="Vipond R."/>
            <person name="Dunning J."/>
            <person name="Chand M."/>
            <person name="Brown C."/>
            <person name="Cohen-Gihon I."/>
            <person name="Erez N."/>
            <person name="Shifman O."/>
            <person name="Israeli O."/>
            <person name="Sharon M."/>
            <person name="Schwartz E."/>
            <person name="Beth-Din A."/>
            <person name="Zvi A."/>
            <person name="Mak T.M."/>
            <person name="Ng Y.K."/>
            <person name="Cui L."/>
            <person name="Lin R.T.P."/>
            <person name="Olson V.A."/>
            <person name="Brooks T."/>
            <person name="Paran N."/>
            <person name="Ihekweazu C."/>
            <person name="Reynolds M.G."/>
        </authorList>
    </citation>
    <scope>NUCLEOTIDE SEQUENCE [LARGE SCALE GENOMIC DNA]</scope>
    <source>
        <strain>MPXV-M5312_HM12_Rivers</strain>
    </source>
</reference>
<gene>
    <name type="primary">OPG164</name>
    <name type="ORF">MPXVgp148</name>
</gene>
<organism>
    <name type="scientific">Monkeypox virus</name>
    <dbReference type="NCBI Taxonomy" id="10244"/>
    <lineage>
        <taxon>Viruses</taxon>
        <taxon>Varidnaviria</taxon>
        <taxon>Bamfordvirae</taxon>
        <taxon>Nucleocytoviricota</taxon>
        <taxon>Pokkesviricetes</taxon>
        <taxon>Chitovirales</taxon>
        <taxon>Poxviridae</taxon>
        <taxon>Chordopoxvirinae</taxon>
        <taxon>Orthopoxvirus</taxon>
    </lineage>
</organism>
<feature type="chain" id="PRO_0000457547" description="Protein OPG164">
    <location>
        <begin position="1"/>
        <end position="228"/>
    </location>
</feature>
<feature type="topological domain" description="Extracellular">
    <location>
        <begin position="1"/>
        <end position="9"/>
    </location>
</feature>
<feature type="transmembrane region" description="Helical" evidence="2">
    <location>
        <begin position="10"/>
        <end position="30"/>
    </location>
</feature>
<feature type="topological domain" description="Cytoplasmic">
    <location>
        <begin position="31"/>
        <end position="228"/>
    </location>
</feature>
<feature type="short sequence motif" description="NPF-motif" evidence="1">
    <location>
        <begin position="169"/>
        <end position="171"/>
    </location>
</feature>
<feature type="short sequence motif" description="NPF-motif" evidence="1">
    <location>
        <begin position="184"/>
        <end position="186"/>
    </location>
</feature>
<feature type="short sequence motif" description="NPF-motif" evidence="1">
    <location>
        <begin position="198"/>
        <end position="200"/>
    </location>
</feature>
<feature type="modified residue" description="Phosphotyrosine" evidence="1">
    <location>
        <position position="120"/>
    </location>
</feature>
<feature type="modified residue" description="Phosphotyrosine" evidence="1">
    <location>
        <position position="140"/>
    </location>
</feature>
<evidence type="ECO:0000250" key="1">
    <source>
        <dbReference type="UniProtKB" id="P68619"/>
    </source>
</evidence>
<evidence type="ECO:0000255" key="2"/>
<evidence type="ECO:0000305" key="3"/>
<protein>
    <recommendedName>
        <fullName>Protein OPG164</fullName>
    </recommendedName>
</protein>
<comment type="function">
    <text evidence="1">Involved in the intracellular transport and egress of virions to the host cell surface with help of protein OPG056. Also participates in the formation of actin tails at the plasma membrane to allow efficient actin-based motility and thus cell to cell transmission of viral particles. Recruits host intersectin-1/ITSN1 and activates host CDC42 to drive ARP2/3-mediated actin polymerization.</text>
</comment>
<comment type="subunit">
    <text evidence="1">Interacts with host NCK. Interacts with protein OPG161 (via C-terminus). Interacts with protein OPG056. Interacts (via C-terminus) with host kinesin light chain/KLC1. Interacts with host intersectin-1/ITSN1 and EPS15.</text>
</comment>
<comment type="subcellular location">
    <subcellularLocation>
        <location evidence="1">Host cell membrane</location>
        <topology evidence="1">Single-pass membrane protein</topology>
    </subcellularLocation>
    <text evidence="1">Found exclusively on the wrapped enveloped virion. Absent in the mature virion (MV) and extracellular enveloped virion (EV).</text>
</comment>
<comment type="PTM">
    <text evidence="1">Phosphorylated on Tyr-120 and Tyr-140. Phosphorylations activate the host ARP2-ARP3 complex and lead to actin nucleation.</text>
</comment>
<comment type="similarity">
    <text evidence="3">Belongs to the orthopoxvirus OPG164 protein family.</text>
</comment>
<keyword id="KW-1032">Host cell membrane</keyword>
<keyword id="KW-1043">Host membrane</keyword>
<keyword id="KW-0945">Host-virus interaction</keyword>
<keyword id="KW-0472">Membrane</keyword>
<keyword id="KW-0597">Phosphoprotein</keyword>
<keyword id="KW-1185">Reference proteome</keyword>
<keyword id="KW-0812">Transmembrane</keyword>
<keyword id="KW-1133">Transmembrane helix</keyword>
<name>PG164_MONPV</name>
<proteinExistence type="inferred from homology"/>
<accession>A0A7H0DND5</accession>